<keyword id="KW-0067">ATP-binding</keyword>
<keyword id="KW-0238">DNA-binding</keyword>
<keyword id="KW-0255">Endonuclease</keyword>
<keyword id="KW-0378">Hydrolase</keyword>
<keyword id="KW-0540">Nuclease</keyword>
<keyword id="KW-0547">Nucleotide-binding</keyword>
<keyword id="KW-0694">RNA-binding</keyword>
<keyword id="KW-0699">rRNA-binding</keyword>
<feature type="chain" id="PRO_1000118570" description="Endonuclease MutS2">
    <location>
        <begin position="1"/>
        <end position="778"/>
    </location>
</feature>
<feature type="domain" description="Smr" evidence="1">
    <location>
        <begin position="702"/>
        <end position="777"/>
    </location>
</feature>
<feature type="binding site" evidence="1">
    <location>
        <begin position="328"/>
        <end position="335"/>
    </location>
    <ligand>
        <name>ATP</name>
        <dbReference type="ChEBI" id="CHEBI:30616"/>
    </ligand>
</feature>
<gene>
    <name evidence="1" type="primary">mutS2</name>
    <name evidence="1" type="synonym">rqcU</name>
    <name type="ordered locus">SPJ_0394</name>
</gene>
<accession>C1CCH3</accession>
<proteinExistence type="inferred from homology"/>
<protein>
    <recommendedName>
        <fullName evidence="1">Endonuclease MutS2</fullName>
        <ecNumber evidence="1">3.1.-.-</ecNumber>
    </recommendedName>
    <alternativeName>
        <fullName evidence="1">Ribosome-associated protein quality control-upstream factor</fullName>
        <shortName evidence="1">RQC-upstream factor</shortName>
        <shortName evidence="1">RqcU</shortName>
        <ecNumber evidence="1">3.6.4.-</ecNumber>
    </alternativeName>
</protein>
<evidence type="ECO:0000255" key="1">
    <source>
        <dbReference type="HAMAP-Rule" id="MF_00092"/>
    </source>
</evidence>
<dbReference type="EC" id="3.1.-.-" evidence="1"/>
<dbReference type="EC" id="3.6.4.-" evidence="1"/>
<dbReference type="EMBL" id="CP000919">
    <property type="protein sequence ID" value="ACO19494.1"/>
    <property type="molecule type" value="Genomic_DNA"/>
</dbReference>
<dbReference type="RefSeq" id="WP_001035031.1">
    <property type="nucleotide sequence ID" value="NC_012466.1"/>
</dbReference>
<dbReference type="SMR" id="C1CCH3"/>
<dbReference type="KEGG" id="sjj:SPJ_0394"/>
<dbReference type="HOGENOM" id="CLU_011252_2_1_9"/>
<dbReference type="Proteomes" id="UP000002206">
    <property type="component" value="Chromosome"/>
</dbReference>
<dbReference type="GO" id="GO:0005524">
    <property type="term" value="F:ATP binding"/>
    <property type="evidence" value="ECO:0007669"/>
    <property type="project" value="UniProtKB-UniRule"/>
</dbReference>
<dbReference type="GO" id="GO:0016887">
    <property type="term" value="F:ATP hydrolysis activity"/>
    <property type="evidence" value="ECO:0007669"/>
    <property type="project" value="InterPro"/>
</dbReference>
<dbReference type="GO" id="GO:0140664">
    <property type="term" value="F:ATP-dependent DNA damage sensor activity"/>
    <property type="evidence" value="ECO:0007669"/>
    <property type="project" value="InterPro"/>
</dbReference>
<dbReference type="GO" id="GO:0004519">
    <property type="term" value="F:endonuclease activity"/>
    <property type="evidence" value="ECO:0007669"/>
    <property type="project" value="UniProtKB-UniRule"/>
</dbReference>
<dbReference type="GO" id="GO:0030983">
    <property type="term" value="F:mismatched DNA binding"/>
    <property type="evidence" value="ECO:0007669"/>
    <property type="project" value="InterPro"/>
</dbReference>
<dbReference type="GO" id="GO:0043023">
    <property type="term" value="F:ribosomal large subunit binding"/>
    <property type="evidence" value="ECO:0007669"/>
    <property type="project" value="UniProtKB-UniRule"/>
</dbReference>
<dbReference type="GO" id="GO:0019843">
    <property type="term" value="F:rRNA binding"/>
    <property type="evidence" value="ECO:0007669"/>
    <property type="project" value="UniProtKB-UniRule"/>
</dbReference>
<dbReference type="GO" id="GO:0006298">
    <property type="term" value="P:mismatch repair"/>
    <property type="evidence" value="ECO:0007669"/>
    <property type="project" value="InterPro"/>
</dbReference>
<dbReference type="GO" id="GO:0045910">
    <property type="term" value="P:negative regulation of DNA recombination"/>
    <property type="evidence" value="ECO:0007669"/>
    <property type="project" value="InterPro"/>
</dbReference>
<dbReference type="GO" id="GO:0072344">
    <property type="term" value="P:rescue of stalled ribosome"/>
    <property type="evidence" value="ECO:0007669"/>
    <property type="project" value="UniProtKB-UniRule"/>
</dbReference>
<dbReference type="FunFam" id="3.30.1370.110:FF:000005">
    <property type="entry name" value="Endonuclease MutS2"/>
    <property type="match status" value="1"/>
</dbReference>
<dbReference type="FunFam" id="3.40.50.300:FF:000830">
    <property type="entry name" value="Endonuclease MutS2"/>
    <property type="match status" value="1"/>
</dbReference>
<dbReference type="Gene3D" id="3.30.1370.110">
    <property type="match status" value="1"/>
</dbReference>
<dbReference type="Gene3D" id="3.40.50.300">
    <property type="entry name" value="P-loop containing nucleotide triphosphate hydrolases"/>
    <property type="match status" value="1"/>
</dbReference>
<dbReference type="HAMAP" id="MF_00092">
    <property type="entry name" value="MutS2"/>
    <property type="match status" value="1"/>
</dbReference>
<dbReference type="InterPro" id="IPR000432">
    <property type="entry name" value="DNA_mismatch_repair_MutS_C"/>
</dbReference>
<dbReference type="InterPro" id="IPR007696">
    <property type="entry name" value="DNA_mismatch_repair_MutS_core"/>
</dbReference>
<dbReference type="InterPro" id="IPR036187">
    <property type="entry name" value="DNA_mismatch_repair_MutS_sf"/>
</dbReference>
<dbReference type="InterPro" id="IPR046893">
    <property type="entry name" value="MSSS"/>
</dbReference>
<dbReference type="InterPro" id="IPR045076">
    <property type="entry name" value="MutS"/>
</dbReference>
<dbReference type="InterPro" id="IPR005747">
    <property type="entry name" value="MutS2"/>
</dbReference>
<dbReference type="InterPro" id="IPR027417">
    <property type="entry name" value="P-loop_NTPase"/>
</dbReference>
<dbReference type="InterPro" id="IPR002625">
    <property type="entry name" value="Smr_dom"/>
</dbReference>
<dbReference type="InterPro" id="IPR036063">
    <property type="entry name" value="Smr_dom_sf"/>
</dbReference>
<dbReference type="NCBIfam" id="TIGR01069">
    <property type="entry name" value="mutS2"/>
    <property type="match status" value="1"/>
</dbReference>
<dbReference type="PANTHER" id="PTHR48466">
    <property type="entry name" value="OS10G0509000 PROTEIN-RELATED"/>
    <property type="match status" value="1"/>
</dbReference>
<dbReference type="PANTHER" id="PTHR48466:SF1">
    <property type="entry name" value="SMR DOMAIN-CONTAINING PROTEIN"/>
    <property type="match status" value="1"/>
</dbReference>
<dbReference type="Pfam" id="PF20297">
    <property type="entry name" value="MSSS"/>
    <property type="match status" value="1"/>
</dbReference>
<dbReference type="Pfam" id="PF00488">
    <property type="entry name" value="MutS_V"/>
    <property type="match status" value="1"/>
</dbReference>
<dbReference type="Pfam" id="PF01713">
    <property type="entry name" value="Smr"/>
    <property type="match status" value="1"/>
</dbReference>
<dbReference type="PIRSF" id="PIRSF005814">
    <property type="entry name" value="MutS_YshD"/>
    <property type="match status" value="1"/>
</dbReference>
<dbReference type="SMART" id="SM00534">
    <property type="entry name" value="MUTSac"/>
    <property type="match status" value="1"/>
</dbReference>
<dbReference type="SMART" id="SM00533">
    <property type="entry name" value="MUTSd"/>
    <property type="match status" value="1"/>
</dbReference>
<dbReference type="SMART" id="SM00463">
    <property type="entry name" value="SMR"/>
    <property type="match status" value="1"/>
</dbReference>
<dbReference type="SUPFAM" id="SSF48334">
    <property type="entry name" value="DNA repair protein MutS, domain III"/>
    <property type="match status" value="1"/>
</dbReference>
<dbReference type="SUPFAM" id="SSF52540">
    <property type="entry name" value="P-loop containing nucleoside triphosphate hydrolases"/>
    <property type="match status" value="1"/>
</dbReference>
<dbReference type="SUPFAM" id="SSF160443">
    <property type="entry name" value="SMR domain-like"/>
    <property type="match status" value="1"/>
</dbReference>
<dbReference type="PROSITE" id="PS00486">
    <property type="entry name" value="DNA_MISMATCH_REPAIR_2"/>
    <property type="match status" value="1"/>
</dbReference>
<dbReference type="PROSITE" id="PS50828">
    <property type="entry name" value="SMR"/>
    <property type="match status" value="1"/>
</dbReference>
<reference key="1">
    <citation type="journal article" date="2010" name="Genome Biol.">
        <title>Structure and dynamics of the pan-genome of Streptococcus pneumoniae and closely related species.</title>
        <authorList>
            <person name="Donati C."/>
            <person name="Hiller N.L."/>
            <person name="Tettelin H."/>
            <person name="Muzzi A."/>
            <person name="Croucher N.J."/>
            <person name="Angiuoli S.V."/>
            <person name="Oggioni M."/>
            <person name="Dunning Hotopp J.C."/>
            <person name="Hu F.Z."/>
            <person name="Riley D.R."/>
            <person name="Covacci A."/>
            <person name="Mitchell T.J."/>
            <person name="Bentley S.D."/>
            <person name="Kilian M."/>
            <person name="Ehrlich G.D."/>
            <person name="Rappuoli R."/>
            <person name="Moxon E.R."/>
            <person name="Masignani V."/>
        </authorList>
    </citation>
    <scope>NUCLEOTIDE SEQUENCE [LARGE SCALE GENOMIC DNA]</scope>
    <source>
        <strain>JJA</strain>
    </source>
</reference>
<name>MUTS2_STRZJ</name>
<sequence>MNKKILETLEFDKVKALFEPHLLTEQGLEQLRQLAPTAKADKIKQAFAEMKEMQALFVEQPHFTILSTKEIAGVCKRLEMGADLNIEEFLLLKRVLLTSRELQSFYANLENVSLEELALWFEKLHDFPQLQGNLQAFNDAGFIENFASEELARIRRKIHDSESQVRDVLQDLLKQKAQMLTEGIVASRNGRQVLPVKNTYRNKIAGVVHDISASGNTVYIEPREVVKLSEEIASLRADERYEMLRILQEISERVRPHAAEIANDAWIIGHLDLIRAKVRFIQERQAVVPQLSENQEIQLLHVCHPLVKNAVANDVYFGQDLTAIVITGPNTGGKTIMLKTLGLTQVMAQSGLPILADKGSRVGIFEEIFADIGDEQSIEQSLSTFSSHMTNIVDILGKVNQHSLLLLDELGAGTDPQEGAALAMAILEDLRLRQIKTMATTHYPELKAYGIETAFVQNASMEFDTATLRPTYRFMQGVPGRSNAFEIAKRLGLSEVIVGDASQQIDQDNDVNRIIEQLEEQTLESRKRLDNIREVEQENLKMNRALKKLYNELNREKETELNKAREQAAEIVDMALSESDQILKNLHSKSQLKPHEIIEAKAKLKKLAPEKVDLSKNKVLQKAKKKRAPKVGDDIVVLSYGQRGTLTSQLKDGRWEAQVGLIKMTLEEKEFDLVQAQQEKAVKKKQVNVVKRTSGRGPQARLDLRGKRYEEAMNELDTFIDQALLNNMAQVDIIHGIGTGVIREGVTKYLQRNKHVKSFGYAPQNAGGSGATIVTFKG</sequence>
<organism>
    <name type="scientific">Streptococcus pneumoniae (strain JJA)</name>
    <dbReference type="NCBI Taxonomy" id="488222"/>
    <lineage>
        <taxon>Bacteria</taxon>
        <taxon>Bacillati</taxon>
        <taxon>Bacillota</taxon>
        <taxon>Bacilli</taxon>
        <taxon>Lactobacillales</taxon>
        <taxon>Streptococcaceae</taxon>
        <taxon>Streptococcus</taxon>
    </lineage>
</organism>
<comment type="function">
    <text evidence="1">Endonuclease that is involved in the suppression of homologous recombination and thus may have a key role in the control of bacterial genetic diversity.</text>
</comment>
<comment type="function">
    <text evidence="1">Acts as a ribosome collision sensor, splitting the ribosome into its 2 subunits. Detects stalled/collided 70S ribosomes which it binds and splits by an ATP-hydrolysis driven conformational change. Acts upstream of the ribosome quality control system (RQC), a ribosome-associated complex that mediates the extraction of incompletely synthesized nascent chains from stalled ribosomes and their subsequent degradation. Probably generates substrates for RQC.</text>
</comment>
<comment type="subunit">
    <text evidence="1">Homodimer. Binds to stalled ribosomes, contacting rRNA.</text>
</comment>
<comment type="similarity">
    <text evidence="1">Belongs to the DNA mismatch repair MutS family. MutS2 subfamily.</text>
</comment>